<keyword id="KW-0150">Chloroplast</keyword>
<keyword id="KW-0472">Membrane</keyword>
<keyword id="KW-0520">NAD</keyword>
<keyword id="KW-0521">NADP</keyword>
<keyword id="KW-0934">Plastid</keyword>
<keyword id="KW-0618">Plastoquinone</keyword>
<keyword id="KW-0874">Quinone</keyword>
<keyword id="KW-0793">Thylakoid</keyword>
<keyword id="KW-1278">Translocase</keyword>
<keyword id="KW-0812">Transmembrane</keyword>
<keyword id="KW-1133">Transmembrane helix</keyword>
<dbReference type="EC" id="7.1.1.-" evidence="1"/>
<dbReference type="EMBL" id="AB240139">
    <property type="protein sequence ID" value="BAE48068.1"/>
    <property type="molecule type" value="Genomic_DNA"/>
</dbReference>
<dbReference type="RefSeq" id="YP_398928.1">
    <property type="nucleotide sequence ID" value="NC_007602.1"/>
</dbReference>
<dbReference type="SMR" id="Q33BW7"/>
<dbReference type="GeneID" id="3776346"/>
<dbReference type="KEGG" id="nto:3776346"/>
<dbReference type="OrthoDB" id="1277114at2759"/>
<dbReference type="GO" id="GO:0009535">
    <property type="term" value="C:chloroplast thylakoid membrane"/>
    <property type="evidence" value="ECO:0007669"/>
    <property type="project" value="UniProtKB-SubCell"/>
</dbReference>
<dbReference type="GO" id="GO:0003954">
    <property type="term" value="F:NADH dehydrogenase activity"/>
    <property type="evidence" value="ECO:0007669"/>
    <property type="project" value="TreeGrafter"/>
</dbReference>
<dbReference type="GO" id="GO:0016655">
    <property type="term" value="F:oxidoreductase activity, acting on NAD(P)H, quinone or similar compound as acceptor"/>
    <property type="evidence" value="ECO:0007669"/>
    <property type="project" value="UniProtKB-UniRule"/>
</dbReference>
<dbReference type="GO" id="GO:0048038">
    <property type="term" value="F:quinone binding"/>
    <property type="evidence" value="ECO:0007669"/>
    <property type="project" value="UniProtKB-KW"/>
</dbReference>
<dbReference type="GO" id="GO:0009060">
    <property type="term" value="P:aerobic respiration"/>
    <property type="evidence" value="ECO:0007669"/>
    <property type="project" value="TreeGrafter"/>
</dbReference>
<dbReference type="GO" id="GO:0019684">
    <property type="term" value="P:photosynthesis, light reaction"/>
    <property type="evidence" value="ECO:0007669"/>
    <property type="project" value="UniProtKB-UniRule"/>
</dbReference>
<dbReference type="HAMAP" id="MF_01350">
    <property type="entry name" value="NDH1_NuoH"/>
    <property type="match status" value="1"/>
</dbReference>
<dbReference type="InterPro" id="IPR001694">
    <property type="entry name" value="NADH_UbQ_OxRdtase_su1/FPO"/>
</dbReference>
<dbReference type="InterPro" id="IPR018086">
    <property type="entry name" value="NADH_UbQ_OxRdtase_su1_CS"/>
</dbReference>
<dbReference type="NCBIfam" id="NF004741">
    <property type="entry name" value="PRK06076.1-2"/>
    <property type="match status" value="1"/>
</dbReference>
<dbReference type="PANTHER" id="PTHR11432">
    <property type="entry name" value="NADH DEHYDROGENASE SUBUNIT 1"/>
    <property type="match status" value="1"/>
</dbReference>
<dbReference type="PANTHER" id="PTHR11432:SF3">
    <property type="entry name" value="NADH-UBIQUINONE OXIDOREDUCTASE CHAIN 1"/>
    <property type="match status" value="1"/>
</dbReference>
<dbReference type="Pfam" id="PF00146">
    <property type="entry name" value="NADHdh"/>
    <property type="match status" value="1"/>
</dbReference>
<dbReference type="PROSITE" id="PS00667">
    <property type="entry name" value="COMPLEX1_ND1_1"/>
    <property type="match status" value="1"/>
</dbReference>
<dbReference type="PROSITE" id="PS00668">
    <property type="entry name" value="COMPLEX1_ND1_2"/>
    <property type="match status" value="1"/>
</dbReference>
<reference key="1">
    <citation type="journal article" date="2006" name="Mol. Genet. Genomics">
        <title>The chloroplast genome of Nicotiana sylvestris and Nicotiana tomentosiformis: complete sequencing confirms that the Nicotiana sylvestris progenitor is the maternal genome donor of Nicotiana tabacum.</title>
        <authorList>
            <person name="Yukawa M."/>
            <person name="Tsudzuki T."/>
            <person name="Sugiura M."/>
        </authorList>
    </citation>
    <scope>NUCLEOTIDE SEQUENCE [LARGE SCALE GENOMIC DNA]</scope>
</reference>
<name>NU1C_NICTO</name>
<organism>
    <name type="scientific">Nicotiana tomentosiformis</name>
    <name type="common">Tobacco</name>
    <dbReference type="NCBI Taxonomy" id="4098"/>
    <lineage>
        <taxon>Eukaryota</taxon>
        <taxon>Viridiplantae</taxon>
        <taxon>Streptophyta</taxon>
        <taxon>Embryophyta</taxon>
        <taxon>Tracheophyta</taxon>
        <taxon>Spermatophyta</taxon>
        <taxon>Magnoliopsida</taxon>
        <taxon>eudicotyledons</taxon>
        <taxon>Gunneridae</taxon>
        <taxon>Pentapetalae</taxon>
        <taxon>asterids</taxon>
        <taxon>lamiids</taxon>
        <taxon>Solanales</taxon>
        <taxon>Solanaceae</taxon>
        <taxon>Nicotianoideae</taxon>
        <taxon>Nicotianeae</taxon>
        <taxon>Nicotiana</taxon>
    </lineage>
</organism>
<protein>
    <recommendedName>
        <fullName evidence="1">NAD(P)H-quinone oxidoreductase subunit 1, chloroplastic</fullName>
        <ecNumber evidence="1">7.1.1.-</ecNumber>
    </recommendedName>
    <alternativeName>
        <fullName evidence="1">NAD(P)H dehydrogenase subunit 1</fullName>
        <shortName evidence="1">NDH subunit 1</shortName>
    </alternativeName>
    <alternativeName>
        <fullName evidence="1">NADH-plastoquinone oxidoreductase subunit 1</fullName>
    </alternativeName>
</protein>
<sequence>MIIDTTEIETINSFSKLESLKEVYGIIWMLFPIFTLVLGITIGVLVIVWLEREISAGIQQRIGPEYAGPLGILQALADGTKLLLKENLIPSTGDTRLFSIGPSIAVISIFLSYSVIPFGDHLVLADLSIGVFFWIAISSIAPVGLLMSGYGSNNKYSFLGGLRAAAQSISYEIPLALCVLSISLLSNSSSTVDIVEAQSKYGFWGWNLWRQPIGFIVFLISSLAECERLPFDLPEAEEELVAGYQTEYSGIKFGLFYIASYLNLLVSSLFVTVLYLGGWNLSIPYIFVPELFGINKKGKVFGTLIGIFITLAKTYLFLFIPIATRWTLPRLRMDQLLNLGWKFLLPISLGNLLLTTSSQLLSL</sequence>
<geneLocation type="chloroplast"/>
<gene>
    <name evidence="1" type="primary">ndhA</name>
</gene>
<accession>Q33BW7</accession>
<proteinExistence type="inferred from homology"/>
<evidence type="ECO:0000255" key="1">
    <source>
        <dbReference type="HAMAP-Rule" id="MF_01350"/>
    </source>
</evidence>
<comment type="function">
    <text evidence="1">NDH shuttles electrons from NAD(P)H:plastoquinone, via FMN and iron-sulfur (Fe-S) centers, to quinones in the photosynthetic chain and possibly in a chloroplast respiratory chain. The immediate electron acceptor for the enzyme in this species is believed to be plastoquinone. Couples the redox reaction to proton translocation, and thus conserves the redox energy in a proton gradient.</text>
</comment>
<comment type="catalytic activity">
    <reaction evidence="1">
        <text>a plastoquinone + NADH + (n+1) H(+)(in) = a plastoquinol + NAD(+) + n H(+)(out)</text>
        <dbReference type="Rhea" id="RHEA:42608"/>
        <dbReference type="Rhea" id="RHEA-COMP:9561"/>
        <dbReference type="Rhea" id="RHEA-COMP:9562"/>
        <dbReference type="ChEBI" id="CHEBI:15378"/>
        <dbReference type="ChEBI" id="CHEBI:17757"/>
        <dbReference type="ChEBI" id="CHEBI:57540"/>
        <dbReference type="ChEBI" id="CHEBI:57945"/>
        <dbReference type="ChEBI" id="CHEBI:62192"/>
    </reaction>
</comment>
<comment type="catalytic activity">
    <reaction evidence="1">
        <text>a plastoquinone + NADPH + (n+1) H(+)(in) = a plastoquinol + NADP(+) + n H(+)(out)</text>
        <dbReference type="Rhea" id="RHEA:42612"/>
        <dbReference type="Rhea" id="RHEA-COMP:9561"/>
        <dbReference type="Rhea" id="RHEA-COMP:9562"/>
        <dbReference type="ChEBI" id="CHEBI:15378"/>
        <dbReference type="ChEBI" id="CHEBI:17757"/>
        <dbReference type="ChEBI" id="CHEBI:57783"/>
        <dbReference type="ChEBI" id="CHEBI:58349"/>
        <dbReference type="ChEBI" id="CHEBI:62192"/>
    </reaction>
</comment>
<comment type="subunit">
    <text evidence="1">NDH is composed of at least 16 different subunits, 5 of which are encoded in the nucleus.</text>
</comment>
<comment type="subcellular location">
    <subcellularLocation>
        <location evidence="1">Plastid</location>
        <location evidence="1">Chloroplast thylakoid membrane</location>
        <topology evidence="1">Multi-pass membrane protein</topology>
    </subcellularLocation>
</comment>
<comment type="similarity">
    <text evidence="1">Belongs to the complex I subunit 1 family.</text>
</comment>
<feature type="chain" id="PRO_0000240027" description="NAD(P)H-quinone oxidoreductase subunit 1, chloroplastic">
    <location>
        <begin position="1"/>
        <end position="363"/>
    </location>
</feature>
<feature type="transmembrane region" description="Helical" evidence="1">
    <location>
        <begin position="30"/>
        <end position="50"/>
    </location>
</feature>
<feature type="transmembrane region" description="Helical" evidence="1">
    <location>
        <begin position="98"/>
        <end position="118"/>
    </location>
</feature>
<feature type="transmembrane region" description="Helical" evidence="1">
    <location>
        <begin position="127"/>
        <end position="147"/>
    </location>
</feature>
<feature type="transmembrane region" description="Helical" evidence="1">
    <location>
        <begin position="165"/>
        <end position="185"/>
    </location>
</feature>
<feature type="transmembrane region" description="Helical" evidence="1">
    <location>
        <begin position="203"/>
        <end position="223"/>
    </location>
</feature>
<feature type="transmembrane region" description="Helical" evidence="1">
    <location>
        <begin position="248"/>
        <end position="268"/>
    </location>
</feature>
<feature type="transmembrane region" description="Helical" evidence="1">
    <location>
        <begin position="300"/>
        <end position="320"/>
    </location>
</feature>
<feature type="transmembrane region" description="Helical" evidence="1">
    <location>
        <begin position="336"/>
        <end position="356"/>
    </location>
</feature>